<gene>
    <name evidence="1" type="primary">gch3</name>
    <name type="ordered locus">Hlac_2188</name>
</gene>
<organism>
    <name type="scientific">Halorubrum lacusprofundi (strain ATCC 49239 / DSM 5036 / JCM 8891 / ACAM 34)</name>
    <dbReference type="NCBI Taxonomy" id="416348"/>
    <lineage>
        <taxon>Archaea</taxon>
        <taxon>Methanobacteriati</taxon>
        <taxon>Methanobacteriota</taxon>
        <taxon>Stenosarchaea group</taxon>
        <taxon>Halobacteria</taxon>
        <taxon>Halobacteriales</taxon>
        <taxon>Haloferacaceae</taxon>
        <taxon>Halorubrum</taxon>
    </lineage>
</organism>
<feature type="chain" id="PRO_1000147161" description="GTP cyclohydrolase III">
    <location>
        <begin position="1"/>
        <end position="257"/>
    </location>
</feature>
<protein>
    <recommendedName>
        <fullName evidence="1">GTP cyclohydrolase III</fullName>
        <ecNumber evidence="1">3.5.4.29</ecNumber>
    </recommendedName>
</protein>
<accession>B9LRB1</accession>
<dbReference type="EC" id="3.5.4.29" evidence="1"/>
<dbReference type="EMBL" id="CP001365">
    <property type="protein sequence ID" value="ACM57765.1"/>
    <property type="molecule type" value="Genomic_DNA"/>
</dbReference>
<dbReference type="RefSeq" id="WP_015910887.1">
    <property type="nucleotide sequence ID" value="NC_012029.1"/>
</dbReference>
<dbReference type="SMR" id="B9LRB1"/>
<dbReference type="GeneID" id="7401121"/>
<dbReference type="KEGG" id="hla:Hlac_2188"/>
<dbReference type="eggNOG" id="arCOG04202">
    <property type="taxonomic scope" value="Archaea"/>
</dbReference>
<dbReference type="HOGENOM" id="CLU_080076_0_0_2"/>
<dbReference type="Proteomes" id="UP000000740">
    <property type="component" value="Chromosome 1"/>
</dbReference>
<dbReference type="GO" id="GO:0005525">
    <property type="term" value="F:GTP binding"/>
    <property type="evidence" value="ECO:0007669"/>
    <property type="project" value="UniProtKB-KW"/>
</dbReference>
<dbReference type="GO" id="GO:0043740">
    <property type="term" value="F:GTP cyclohydrolase IIa activity"/>
    <property type="evidence" value="ECO:0007669"/>
    <property type="project" value="UniProtKB-EC"/>
</dbReference>
<dbReference type="GO" id="GO:0009058">
    <property type="term" value="P:biosynthetic process"/>
    <property type="evidence" value="ECO:0007669"/>
    <property type="project" value="InterPro"/>
</dbReference>
<dbReference type="Gene3D" id="3.30.70.270">
    <property type="match status" value="1"/>
</dbReference>
<dbReference type="Gene3D" id="3.30.70.1230">
    <property type="entry name" value="Nucleotide cyclase"/>
    <property type="match status" value="1"/>
</dbReference>
<dbReference type="HAMAP" id="MF_00608">
    <property type="entry name" value="GTP_cyclohydro_3"/>
    <property type="match status" value="1"/>
</dbReference>
<dbReference type="InterPro" id="IPR007839">
    <property type="entry name" value="GTP_CycHdrlase_3"/>
</dbReference>
<dbReference type="InterPro" id="IPR029787">
    <property type="entry name" value="Nucleotide_cyclase"/>
</dbReference>
<dbReference type="InterPro" id="IPR043128">
    <property type="entry name" value="Rev_trsase/Diguanyl_cyclase"/>
</dbReference>
<dbReference type="NCBIfam" id="NF002587">
    <property type="entry name" value="PRK02240.1"/>
    <property type="match status" value="1"/>
</dbReference>
<dbReference type="PANTHER" id="PTHR42202">
    <property type="entry name" value="GTP CYCLOHYDROLASE III"/>
    <property type="match status" value="1"/>
</dbReference>
<dbReference type="PANTHER" id="PTHR42202:SF1">
    <property type="entry name" value="GTP CYCLOHYDROLASE III"/>
    <property type="match status" value="1"/>
</dbReference>
<dbReference type="Pfam" id="PF05165">
    <property type="entry name" value="GCH_III"/>
    <property type="match status" value="1"/>
</dbReference>
<dbReference type="PIRSF" id="PIRSF009265">
    <property type="entry name" value="GTP_cyclohydro_3"/>
    <property type="match status" value="1"/>
</dbReference>
<reference key="1">
    <citation type="journal article" date="2016" name="Stand. Genomic Sci.">
        <title>Complete genome sequence of the Antarctic Halorubrum lacusprofundi type strain ACAM 34.</title>
        <authorList>
            <person name="Anderson I.J."/>
            <person name="DasSarma P."/>
            <person name="Lucas S."/>
            <person name="Copeland A."/>
            <person name="Lapidus A."/>
            <person name="Del Rio T.G."/>
            <person name="Tice H."/>
            <person name="Dalin E."/>
            <person name="Bruce D.C."/>
            <person name="Goodwin L."/>
            <person name="Pitluck S."/>
            <person name="Sims D."/>
            <person name="Brettin T.S."/>
            <person name="Detter J.C."/>
            <person name="Han C.S."/>
            <person name="Larimer F."/>
            <person name="Hauser L."/>
            <person name="Land M."/>
            <person name="Ivanova N."/>
            <person name="Richardson P."/>
            <person name="Cavicchioli R."/>
            <person name="DasSarma S."/>
            <person name="Woese C.R."/>
            <person name="Kyrpides N.C."/>
        </authorList>
    </citation>
    <scope>NUCLEOTIDE SEQUENCE [LARGE SCALE GENOMIC DNA]</scope>
    <source>
        <strain>ATCC 49239 / DSM 5036 / JCM 8891 / ACAM 34</strain>
    </source>
</reference>
<comment type="function">
    <text evidence="1">Catalyzes the formation of 2-amino-5-formylamino-6-ribofuranosylamino-4(3H)-pyrimidinone ribonucleotide monophosphate and inorganic phosphate from GTP. Also has an independent pyrophosphate phosphohydrolase activity.</text>
</comment>
<comment type="catalytic activity">
    <reaction evidence="1">
        <text>GTP + 3 H2O = 2-amino-5-formylamino-6-(5-phospho-D-ribosylamino)pyrimidin-4(3H)-one + 2 phosphate + 2 H(+)</text>
        <dbReference type="Rhea" id="RHEA:22468"/>
        <dbReference type="ChEBI" id="CHEBI:15377"/>
        <dbReference type="ChEBI" id="CHEBI:15378"/>
        <dbReference type="ChEBI" id="CHEBI:37565"/>
        <dbReference type="ChEBI" id="CHEBI:43474"/>
        <dbReference type="ChEBI" id="CHEBI:57258"/>
        <dbReference type="EC" id="3.5.4.29"/>
    </reaction>
</comment>
<comment type="similarity">
    <text evidence="1">Belongs to the archaeal-type GTP cyclohydrolase family.</text>
</comment>
<name>GCH3_HALLT</name>
<sequence>MTTTQVTLIQIDNYGPWTVTPEPRREMDLQSLQSRLFADIAQFMGPRDAYVFSTRYDNMIAVTNGLDGAAHAALQESIGNRYPVSVSLGTGVSERPIDALEAANRLLQTEGSAQDESRTEVLAGDYLTETAPSDLQIAHFDVVNVTGKYTDRLNEFDTFLNIERAYGSLTRYLRESHGALSFFVGGDNVVAVCPDLPEGAFADTVAHVADDVDIELQVGVGRGASAHEAGFAAKHALEACRNDGTSVELSVAPALSD</sequence>
<proteinExistence type="inferred from homology"/>
<keyword id="KW-0342">GTP-binding</keyword>
<keyword id="KW-0378">Hydrolase</keyword>
<keyword id="KW-0547">Nucleotide-binding</keyword>
<keyword id="KW-1185">Reference proteome</keyword>
<evidence type="ECO:0000255" key="1">
    <source>
        <dbReference type="HAMAP-Rule" id="MF_00608"/>
    </source>
</evidence>